<protein>
    <recommendedName>
        <fullName evidence="10">Potassium channel toxin alpha-KTx 15.4</fullName>
        <shortName evidence="9">AaTX1</shortName>
        <shortName evidence="8">Toxin Aa1</shortName>
    </recommendedName>
</protein>
<proteinExistence type="evidence at protein level"/>
<evidence type="ECO:0000250" key="1"/>
<evidence type="ECO:0000250" key="2">
    <source>
        <dbReference type="UniProtKB" id="P60208"/>
    </source>
</evidence>
<evidence type="ECO:0000250" key="3">
    <source>
        <dbReference type="UniProtKB" id="P60233"/>
    </source>
</evidence>
<evidence type="ECO:0000250" key="4">
    <source>
        <dbReference type="UniProtKB" id="P84777"/>
    </source>
</evidence>
<evidence type="ECO:0000250" key="5">
    <source>
        <dbReference type="UniProtKB" id="Q86BX0"/>
    </source>
</evidence>
<evidence type="ECO:0000269" key="6">
    <source>
    </source>
</evidence>
<evidence type="ECO:0000269" key="7">
    <source>
    </source>
</evidence>
<evidence type="ECO:0000303" key="8">
    <source>
    </source>
</evidence>
<evidence type="ECO:0000303" key="9">
    <source>
    </source>
</evidence>
<evidence type="ECO:0000305" key="10"/>
<organism>
    <name type="scientific">Androctonus australis</name>
    <name type="common">Sahara scorpion</name>
    <dbReference type="NCBI Taxonomy" id="6858"/>
    <lineage>
        <taxon>Eukaryota</taxon>
        <taxon>Metazoa</taxon>
        <taxon>Ecdysozoa</taxon>
        <taxon>Arthropoda</taxon>
        <taxon>Chelicerata</taxon>
        <taxon>Arachnida</taxon>
        <taxon>Scorpiones</taxon>
        <taxon>Buthida</taxon>
        <taxon>Buthoidea</taxon>
        <taxon>Buthidae</taxon>
        <taxon>Androctonus</taxon>
    </lineage>
</organism>
<reference key="1">
    <citation type="journal article" date="2003" name="Toxicon">
        <title>Characterisation of the genes encoding Aa1 isoforms from the scorpion Androctonus australis.</title>
        <authorList>
            <person name="Legros C."/>
            <person name="Bougis P.E."/>
            <person name="Martin-Eauclaire M.-F."/>
        </authorList>
    </citation>
    <scope>NUCLEOTIDE SEQUENCE [GENOMIC DNA / MRNA]</scope>
    <source>
        <tissue>Muscle</tissue>
        <tissue>Venom gland</tissue>
    </source>
</reference>
<reference key="2">
    <citation type="journal article" date="2000" name="Biochim. Biophys. Acta">
        <title>Fast K(+) currents from cerebellum granular cells are completely blocked by a peptide purified from Androctonus australis Garzoni scorpion venom.</title>
        <authorList>
            <person name="Pisciotta M."/>
            <person name="Coronas F.I."/>
            <person name="Bloch C. Jr."/>
            <person name="Prestipino G."/>
            <person name="Possani L.D."/>
        </authorList>
    </citation>
    <scope>PROTEIN SEQUENCE OF 23-59</scope>
    <scope>MASS SPECTROMETRY</scope>
    <scope>PYROGLUTAMATE FORMATION AT GLN-23</scope>
    <scope>FUNCTION</scope>
    <scope>SUBCELLULAR LOCATION</scope>
    <source>
        <strain>Garzoni</strain>
        <tissue>Venom</tissue>
    </source>
</reference>
<reference key="3">
    <citation type="journal article" date="2002" name="Eur. J. Biochem.">
        <title>Expanding the scorpion toxin alpha-KTX 15 family with AmmTX3 from Androctonus mauretanicus.</title>
        <authorList>
            <person name="Vacher H."/>
            <person name="Alami M."/>
            <person name="Crest M."/>
            <person name="Possani L.D."/>
            <person name="Bougis P.E."/>
            <person name="Martin-Eauclaire M.-F."/>
        </authorList>
    </citation>
    <scope>SYNTHESIS OF 23-59</scope>
    <scope>FUNCTION</scope>
</reference>
<comment type="function">
    <text evidence="2 6 7">Blocker of A-type voltage-gated potassium channels of cerebellar granular cells (PubMed:11018665). May also inhibit Kv4/KCND when coexpressed with DPP6 or DPP10 (By similarity). The occlusion of the outer entry of the K(+) conducting pore is partially reversible and affects both open and closed channels (PubMed:11018665). It shares the same target in rat brain than BmTX3 (AC Q8I0L5) and AmmTX3 (AC P60208).</text>
</comment>
<comment type="subcellular location">
    <subcellularLocation>
        <location evidence="6">Secreted</location>
    </subcellularLocation>
</comment>
<comment type="tissue specificity">
    <text evidence="10">Expressed by the venom gland.</text>
</comment>
<comment type="domain">
    <text evidence="4">Has the structural arrangement of an alpha-helix connected to a beta-sheet by disulfide bonds (CSalpha/beta).</text>
</comment>
<comment type="mass spectrometry"/>
<comment type="similarity">
    <text evidence="10">Belongs to the short scorpion toxin superfamily. Potassium channel inhibitor family. Alpha-KTx 15 subfamily.</text>
</comment>
<keyword id="KW-0903">Direct protein sequencing</keyword>
<keyword id="KW-1015">Disulfide bond</keyword>
<keyword id="KW-0872">Ion channel impairing toxin</keyword>
<keyword id="KW-0528">Neurotoxin</keyword>
<keyword id="KW-0632">Potassium channel impairing toxin</keyword>
<keyword id="KW-0873">Pyrrolidone carboxylic acid</keyword>
<keyword id="KW-0964">Secreted</keyword>
<keyword id="KW-0732">Signal</keyword>
<keyword id="KW-0800">Toxin</keyword>
<keyword id="KW-1220">Voltage-gated potassium channel impairing toxin</keyword>
<feature type="signal peptide" evidence="6">
    <location>
        <begin position="1"/>
        <end position="22"/>
    </location>
</feature>
<feature type="chain" id="PRO_0000035310" description="Potassium channel toxin alpha-KTx 15.4" evidence="6">
    <location>
        <begin position="23"/>
        <end position="59"/>
    </location>
</feature>
<feature type="site" description="Hot spot basic residue in hERG blocking currents" evidence="3">
    <location>
        <position position="28"/>
    </location>
</feature>
<feature type="site" description="Hot spot basic residue in hERG blocking currents" evidence="3">
    <location>
        <position position="40"/>
    </location>
</feature>
<feature type="site" description="Hot spot basic residue in hERG blocking currents" evidence="3">
    <location>
        <position position="41"/>
    </location>
</feature>
<feature type="site" description="Basic residue of the functional dyad" evidence="1">
    <location>
        <position position="49"/>
    </location>
</feature>
<feature type="site" description="Aromatic residue of the functional dyad" evidence="1">
    <location>
        <position position="58"/>
    </location>
</feature>
<feature type="modified residue" description="Pyrrolidone carboxylic acid" evidence="6">
    <location>
        <position position="23"/>
    </location>
</feature>
<feature type="disulfide bond" evidence="5">
    <location>
        <begin position="30"/>
        <end position="50"/>
    </location>
</feature>
<feature type="disulfide bond" evidence="5">
    <location>
        <begin position="35"/>
        <end position="55"/>
    </location>
</feature>
<feature type="disulfide bond" evidence="5">
    <location>
        <begin position="39"/>
        <end position="57"/>
    </location>
</feature>
<feature type="sequence conflict" description="In Ref. 2; AA sequence." evidence="10" ref="2">
    <original>I</original>
    <variation>N</variation>
    <location>
        <position position="24"/>
    </location>
</feature>
<name>KA154_ANDAU</name>
<sequence>MKFSSIILLTLLICSMSIFGNCQIETNKKCQGGSCASVCRRVIGVAAGKCINGRCVCYP</sequence>
<dbReference type="EMBL" id="AJ427745">
    <property type="protein sequence ID" value="CAD20744.1"/>
    <property type="molecule type" value="Genomic_DNA"/>
</dbReference>
<dbReference type="EMBL" id="AJ427743">
    <property type="protein sequence ID" value="CAD20742.1"/>
    <property type="molecule type" value="mRNA"/>
</dbReference>
<dbReference type="SMR" id="Q867F4"/>
<dbReference type="GO" id="GO:0005576">
    <property type="term" value="C:extracellular region"/>
    <property type="evidence" value="ECO:0007669"/>
    <property type="project" value="UniProtKB-SubCell"/>
</dbReference>
<dbReference type="GO" id="GO:0008200">
    <property type="term" value="F:ion channel inhibitor activity"/>
    <property type="evidence" value="ECO:0007669"/>
    <property type="project" value="InterPro"/>
</dbReference>
<dbReference type="GO" id="GO:0015459">
    <property type="term" value="F:potassium channel regulator activity"/>
    <property type="evidence" value="ECO:0007669"/>
    <property type="project" value="UniProtKB-KW"/>
</dbReference>
<dbReference type="GO" id="GO:0090729">
    <property type="term" value="F:toxin activity"/>
    <property type="evidence" value="ECO:0007669"/>
    <property type="project" value="UniProtKB-KW"/>
</dbReference>
<dbReference type="Gene3D" id="3.30.30.10">
    <property type="entry name" value="Knottin, scorpion toxin-like"/>
    <property type="match status" value="1"/>
</dbReference>
<dbReference type="InterPro" id="IPR036574">
    <property type="entry name" value="Scorpion_toxin-like_sf"/>
</dbReference>
<dbReference type="InterPro" id="IPR001947">
    <property type="entry name" value="Scorpion_toxinS_K_inh"/>
</dbReference>
<dbReference type="Pfam" id="PF00451">
    <property type="entry name" value="Toxin_2"/>
    <property type="match status" value="1"/>
</dbReference>
<dbReference type="SUPFAM" id="SSF57095">
    <property type="entry name" value="Scorpion toxin-like"/>
    <property type="match status" value="1"/>
</dbReference>
<dbReference type="PROSITE" id="PS01138">
    <property type="entry name" value="SCORP_SHORT_TOXIN"/>
    <property type="match status" value="1"/>
</dbReference>
<accession>Q867F4</accession>